<name>THF1_ARATH</name>
<organism>
    <name type="scientific">Arabidopsis thaliana</name>
    <name type="common">Mouse-ear cress</name>
    <dbReference type="NCBI Taxonomy" id="3702"/>
    <lineage>
        <taxon>Eukaryota</taxon>
        <taxon>Viridiplantae</taxon>
        <taxon>Streptophyta</taxon>
        <taxon>Embryophyta</taxon>
        <taxon>Tracheophyta</taxon>
        <taxon>Spermatophyta</taxon>
        <taxon>Magnoliopsida</taxon>
        <taxon>eudicotyledons</taxon>
        <taxon>Gunneridae</taxon>
        <taxon>Pentapetalae</taxon>
        <taxon>rosids</taxon>
        <taxon>malvids</taxon>
        <taxon>Brassicales</taxon>
        <taxon>Brassicaceae</taxon>
        <taxon>Camelineae</taxon>
        <taxon>Arabidopsis</taxon>
    </lineage>
</organism>
<keyword id="KW-0150">Chloroplast</keyword>
<keyword id="KW-0175">Coiled coil</keyword>
<keyword id="KW-0472">Membrane</keyword>
<keyword id="KW-0934">Plastid</keyword>
<keyword id="KW-1002">Plastid outer membrane</keyword>
<keyword id="KW-1185">Reference proteome</keyword>
<keyword id="KW-0809">Transit peptide</keyword>
<keyword id="KW-0812">Transmembrane</keyword>
<keyword id="KW-1133">Transmembrane helix</keyword>
<comment type="function">
    <text evidence="2 3">Involved in a dynamic process of vesicle-mediated thylakoid membrane biogenesis. Required for the normal organization of vesicles into mature thylakoid stacks and ultimately for leaf development. Also involved in a sugar-signaling mechanism in roots by mediating signaling between the plasma membrane and the plastid. Probably acts downstream of the plasma membrane-delimited heterotrimeric G-protein GPA1 in a D-glucose signaling pathway.</text>
</comment>
<comment type="subunit">
    <text evidence="3">Interacts with GPA1.</text>
</comment>
<comment type="interaction">
    <interactant intactId="EBI-972220">
        <id>Q9SKT0</id>
    </interactant>
    <interactant intactId="EBI-443890">
        <id>P18064</id>
        <label>GPA1</label>
    </interactant>
    <organismsDiffer>false</organismsDiffer>
    <experiments>4</experiments>
</comment>
<comment type="subcellular location">
    <subcellularLocation>
        <location>Plastid</location>
        <location>Chloroplast outer membrane</location>
        <topology>Single-pass membrane protein</topology>
    </subcellularLocation>
    <subcellularLocation>
        <location>Plastid</location>
        <location>Chloroplast stroma</location>
    </subcellularLocation>
</comment>
<comment type="tissue specificity">
    <text evidence="2 3">Ubiquitous. Present at higher level in hypocotyls (at protein level). Ubiquitously expressed in all organs, in roots of both light-grown and dark-grown seedlings. Highly expressed in the root apical meristems.</text>
</comment>
<comment type="developmental stage">
    <text>Rapidly degraded upon D-glucose but not L-glucose treatment (at protein level). Accumulates in leaves of plants grown under normal long daylight (16 hours)/dark (8 hours) conditions. Levels are greatly reduced in leaves from plants placed in complete darkness for 24 hours. Transcript levels return to normal within 6 hours after plants are returned to normal light levels.</text>
</comment>
<comment type="similarity">
    <text evidence="4">Belongs to the THF1 family.</text>
</comment>
<protein>
    <recommendedName>
        <fullName>Protein THYLAKOID FORMATION 1, chloroplastic</fullName>
    </recommendedName>
</protein>
<gene>
    <name type="primary">THF1</name>
    <name type="ordered locus">At2g20890</name>
    <name type="ORF">F5H14.14</name>
</gene>
<sequence length="300" mass="33796">MAATAISSLSFPALGQSDKISNFASSRPLASAIRICTKFSRLSLNSRSTSKSLIHCMSNVTADVPPVSETKSKFLKAYKRPIPSIYNTVLQELIVQQHLMRYKKTYRYDPVFALGFVTVYDQLMEGYPSDQDRDAIFKAYIEALNEDPKQYRIDAQKMEEWARSQTSASLVDFSSKEGDIEAVLKDIAGRAGSKEGFSYSRFFAVGLFRLLELASATDPTVLDKLCASLNINKKSVDRDLDVYRNLLSKLVQAKELLKEYVEREKKKQGERAQSQKANETISKCLGDTLYNPSFLVERKS</sequence>
<evidence type="ECO:0000255" key="1"/>
<evidence type="ECO:0000269" key="2">
    <source>
    </source>
</evidence>
<evidence type="ECO:0000269" key="3">
    <source>
    </source>
</evidence>
<evidence type="ECO:0000305" key="4"/>
<proteinExistence type="evidence at protein level"/>
<dbReference type="EMBL" id="AY899908">
    <property type="protein sequence ID" value="AAW82331.1"/>
    <property type="molecule type" value="mRNA"/>
</dbReference>
<dbReference type="EMBL" id="AC006234">
    <property type="protein sequence ID" value="AAD20906.1"/>
    <property type="molecule type" value="Genomic_DNA"/>
</dbReference>
<dbReference type="EMBL" id="CP002685">
    <property type="protein sequence ID" value="AEC07092.1"/>
    <property type="molecule type" value="Genomic_DNA"/>
</dbReference>
<dbReference type="EMBL" id="AY062799">
    <property type="protein sequence ID" value="AAL32877.1"/>
    <property type="molecule type" value="mRNA"/>
</dbReference>
<dbReference type="EMBL" id="AY081596">
    <property type="protein sequence ID" value="AAM10158.1"/>
    <property type="molecule type" value="mRNA"/>
</dbReference>
<dbReference type="EMBL" id="AY087394">
    <property type="protein sequence ID" value="AAM64943.1"/>
    <property type="molecule type" value="mRNA"/>
</dbReference>
<dbReference type="PIR" id="F84594">
    <property type="entry name" value="F84594"/>
</dbReference>
<dbReference type="RefSeq" id="NP_565491.1">
    <property type="nucleotide sequence ID" value="NM_127659.4"/>
</dbReference>
<dbReference type="SMR" id="Q9SKT0"/>
<dbReference type="BioGRID" id="1976">
    <property type="interactions" value="5"/>
</dbReference>
<dbReference type="FunCoup" id="Q9SKT0">
    <property type="interactions" value="1427"/>
</dbReference>
<dbReference type="IntAct" id="Q9SKT0">
    <property type="interactions" value="3"/>
</dbReference>
<dbReference type="STRING" id="3702.Q9SKT0"/>
<dbReference type="iPTMnet" id="Q9SKT0"/>
<dbReference type="PaxDb" id="3702-AT2G20890.1"/>
<dbReference type="ProteomicsDB" id="234411"/>
<dbReference type="EnsemblPlants" id="AT2G20890.1">
    <property type="protein sequence ID" value="AT2G20890.1"/>
    <property type="gene ID" value="AT2G20890"/>
</dbReference>
<dbReference type="GeneID" id="816623"/>
<dbReference type="Gramene" id="AT2G20890.1">
    <property type="protein sequence ID" value="AT2G20890.1"/>
    <property type="gene ID" value="AT2G20890"/>
</dbReference>
<dbReference type="KEGG" id="ath:AT2G20890"/>
<dbReference type="Araport" id="AT2G20890"/>
<dbReference type="TAIR" id="AT2G20890">
    <property type="gene designation" value="PSB29"/>
</dbReference>
<dbReference type="eggNOG" id="ENOG502QUQV">
    <property type="taxonomic scope" value="Eukaryota"/>
</dbReference>
<dbReference type="HOGENOM" id="CLU_079763_0_1_1"/>
<dbReference type="InParanoid" id="Q9SKT0"/>
<dbReference type="OMA" id="MVEMHLL"/>
<dbReference type="OrthoDB" id="4812at2759"/>
<dbReference type="PhylomeDB" id="Q9SKT0"/>
<dbReference type="CD-CODE" id="4299E36E">
    <property type="entry name" value="Nucleolus"/>
</dbReference>
<dbReference type="PRO" id="PR:Q9SKT0"/>
<dbReference type="Proteomes" id="UP000006548">
    <property type="component" value="Chromosome 2"/>
</dbReference>
<dbReference type="ExpressionAtlas" id="Q9SKT0">
    <property type="expression patterns" value="baseline and differential"/>
</dbReference>
<dbReference type="GO" id="GO:0009507">
    <property type="term" value="C:chloroplast"/>
    <property type="evidence" value="ECO:0000314"/>
    <property type="project" value="TAIR"/>
</dbReference>
<dbReference type="GO" id="GO:0009941">
    <property type="term" value="C:chloroplast envelope"/>
    <property type="evidence" value="ECO:0007005"/>
    <property type="project" value="TAIR"/>
</dbReference>
<dbReference type="GO" id="GO:0009707">
    <property type="term" value="C:chloroplast outer membrane"/>
    <property type="evidence" value="ECO:0007669"/>
    <property type="project" value="UniProtKB-SubCell"/>
</dbReference>
<dbReference type="GO" id="GO:0009570">
    <property type="term" value="C:chloroplast stroma"/>
    <property type="evidence" value="ECO:0007005"/>
    <property type="project" value="TAIR"/>
</dbReference>
<dbReference type="GO" id="GO:0009534">
    <property type="term" value="C:chloroplast thylakoid"/>
    <property type="evidence" value="ECO:0007005"/>
    <property type="project" value="TAIR"/>
</dbReference>
<dbReference type="GO" id="GO:0009535">
    <property type="term" value="C:chloroplast thylakoid membrane"/>
    <property type="evidence" value="ECO:0007005"/>
    <property type="project" value="TAIR"/>
</dbReference>
<dbReference type="GO" id="GO:0005739">
    <property type="term" value="C:mitochondrion"/>
    <property type="evidence" value="ECO:0007005"/>
    <property type="project" value="TAIR"/>
</dbReference>
<dbReference type="GO" id="GO:0009528">
    <property type="term" value="C:plastid inner membrane"/>
    <property type="evidence" value="ECO:0000314"/>
    <property type="project" value="TAIR"/>
</dbReference>
<dbReference type="GO" id="GO:0009527">
    <property type="term" value="C:plastid outer membrane"/>
    <property type="evidence" value="ECO:0000314"/>
    <property type="project" value="TAIR"/>
</dbReference>
<dbReference type="GO" id="GO:0009532">
    <property type="term" value="C:plastid stroma"/>
    <property type="evidence" value="ECO:0000314"/>
    <property type="project" value="TAIR"/>
</dbReference>
<dbReference type="GO" id="GO:0010319">
    <property type="term" value="C:stromule"/>
    <property type="evidence" value="ECO:0000314"/>
    <property type="project" value="TAIR"/>
</dbReference>
<dbReference type="GO" id="GO:0015996">
    <property type="term" value="P:chlorophyll catabolic process"/>
    <property type="evidence" value="ECO:0000315"/>
    <property type="project" value="CACAO"/>
</dbReference>
<dbReference type="GO" id="GO:0050829">
    <property type="term" value="P:defense response to Gram-negative bacterium"/>
    <property type="evidence" value="ECO:0000315"/>
    <property type="project" value="TAIR"/>
</dbReference>
<dbReference type="GO" id="GO:0007186">
    <property type="term" value="P:G protein-coupled receptor signaling pathway"/>
    <property type="evidence" value="ECO:0000353"/>
    <property type="project" value="TAIR"/>
</dbReference>
<dbReference type="GO" id="GO:0010207">
    <property type="term" value="P:photosystem II assembly"/>
    <property type="evidence" value="ECO:0000304"/>
    <property type="project" value="TAIR"/>
</dbReference>
<dbReference type="GO" id="GO:1902458">
    <property type="term" value="P:positive regulation of stomatal opening"/>
    <property type="evidence" value="ECO:0000315"/>
    <property type="project" value="TAIR"/>
</dbReference>
<dbReference type="GO" id="GO:0045037">
    <property type="term" value="P:protein import into chloroplast stroma"/>
    <property type="evidence" value="ECO:0000314"/>
    <property type="project" value="TAIR"/>
</dbReference>
<dbReference type="GO" id="GO:0045038">
    <property type="term" value="P:protein import into chloroplast thylakoid membrane"/>
    <property type="evidence" value="ECO:0000314"/>
    <property type="project" value="TAIR"/>
</dbReference>
<dbReference type="GO" id="GO:1903426">
    <property type="term" value="P:regulation of reactive oxygen species biosynthetic process"/>
    <property type="evidence" value="ECO:0000315"/>
    <property type="project" value="TAIR"/>
</dbReference>
<dbReference type="GO" id="GO:2000070">
    <property type="term" value="P:regulation of response to water deprivation"/>
    <property type="evidence" value="ECO:0000315"/>
    <property type="project" value="TAIR"/>
</dbReference>
<dbReference type="GO" id="GO:0010182">
    <property type="term" value="P:sugar mediated signaling pathway"/>
    <property type="evidence" value="ECO:0000315"/>
    <property type="project" value="TAIR"/>
</dbReference>
<dbReference type="GO" id="GO:0010027">
    <property type="term" value="P:thylakoid membrane organization"/>
    <property type="evidence" value="ECO:0000315"/>
    <property type="project" value="TAIR"/>
</dbReference>
<dbReference type="HAMAP" id="MF_01843">
    <property type="entry name" value="Thf1"/>
    <property type="match status" value="1"/>
</dbReference>
<dbReference type="InterPro" id="IPR017499">
    <property type="entry name" value="Thf1"/>
</dbReference>
<dbReference type="NCBIfam" id="TIGR03060">
    <property type="entry name" value="PS_II_psb29"/>
    <property type="match status" value="1"/>
</dbReference>
<dbReference type="PANTHER" id="PTHR34793">
    <property type="entry name" value="PROTEIN THYLAKOID FORMATION 1, CHLOROPLASTIC"/>
    <property type="match status" value="1"/>
</dbReference>
<dbReference type="PANTHER" id="PTHR34793:SF1">
    <property type="entry name" value="PROTEIN THYLAKOID FORMATION 1, CHLOROPLASTIC"/>
    <property type="match status" value="1"/>
</dbReference>
<dbReference type="Pfam" id="PF11264">
    <property type="entry name" value="ThylakoidFormat"/>
    <property type="match status" value="1"/>
</dbReference>
<accession>Q9SKT0</accession>
<accession>Q8LB69</accession>
<feature type="transit peptide" description="Chloroplast" evidence="1">
    <location>
        <begin position="1"/>
        <end position="67"/>
    </location>
</feature>
<feature type="chain" id="PRO_0000235207" description="Protein THYLAKOID FORMATION 1, chloroplastic">
    <location>
        <begin position="68"/>
        <end position="300"/>
    </location>
</feature>
<feature type="topological domain" description="Chloroplast intermembrane" evidence="1">
    <location>
        <begin position="68"/>
        <end position="196"/>
    </location>
</feature>
<feature type="transmembrane region" description="Helical" evidence="1">
    <location>
        <begin position="197"/>
        <end position="219"/>
    </location>
</feature>
<feature type="topological domain" description="Cytoplasmic" evidence="1">
    <location>
        <begin position="220"/>
        <end position="300"/>
    </location>
</feature>
<feature type="coiled-coil region" evidence="1">
    <location>
        <begin position="239"/>
        <end position="268"/>
    </location>
</feature>
<feature type="sequence conflict" description="In Ref. 1; AAW82331 and 5; AAM64943." evidence="4" ref="1 5">
    <original>K</original>
    <variation>N</variation>
    <location>
        <position position="254"/>
    </location>
</feature>
<feature type="sequence conflict" description="In Ref. 1; AAW82331 and 5; AAM64943." evidence="4" ref="1 5">
    <original>G</original>
    <variation>E</variation>
    <location>
        <position position="269"/>
    </location>
</feature>
<reference key="1">
    <citation type="journal article" date="2004" name="Plant Physiol.">
        <title>Deletion of the chloroplast-localized thylakoid formation1 gene product in Arabidopsis leads to deficient thylakoid formation and variegated leaves.</title>
        <authorList>
            <person name="Wang Q."/>
            <person name="Sullivan R.W."/>
            <person name="Kight A."/>
            <person name="Henry R.L."/>
            <person name="Huang J."/>
            <person name="Jones A.M."/>
            <person name="Korth K.L."/>
        </authorList>
    </citation>
    <scope>NUCLEOTIDE SEQUENCE [MRNA]</scope>
    <scope>FUNCTION</scope>
    <scope>SUBCELLULAR LOCATION</scope>
    <scope>TISSUE SPECIFICITY</scope>
</reference>
<reference key="2">
    <citation type="journal article" date="1999" name="Nature">
        <title>Sequence and analysis of chromosome 2 of the plant Arabidopsis thaliana.</title>
        <authorList>
            <person name="Lin X."/>
            <person name="Kaul S."/>
            <person name="Rounsley S.D."/>
            <person name="Shea T.P."/>
            <person name="Benito M.-I."/>
            <person name="Town C.D."/>
            <person name="Fujii C.Y."/>
            <person name="Mason T.M."/>
            <person name="Bowman C.L."/>
            <person name="Barnstead M.E."/>
            <person name="Feldblyum T.V."/>
            <person name="Buell C.R."/>
            <person name="Ketchum K.A."/>
            <person name="Lee J.J."/>
            <person name="Ronning C.M."/>
            <person name="Koo H.L."/>
            <person name="Moffat K.S."/>
            <person name="Cronin L.A."/>
            <person name="Shen M."/>
            <person name="Pai G."/>
            <person name="Van Aken S."/>
            <person name="Umayam L."/>
            <person name="Tallon L.J."/>
            <person name="Gill J.E."/>
            <person name="Adams M.D."/>
            <person name="Carrera A.J."/>
            <person name="Creasy T.H."/>
            <person name="Goodman H.M."/>
            <person name="Somerville C.R."/>
            <person name="Copenhaver G.P."/>
            <person name="Preuss D."/>
            <person name="Nierman W.C."/>
            <person name="White O."/>
            <person name="Eisen J.A."/>
            <person name="Salzberg S.L."/>
            <person name="Fraser C.M."/>
            <person name="Venter J.C."/>
        </authorList>
    </citation>
    <scope>NUCLEOTIDE SEQUENCE [LARGE SCALE GENOMIC DNA]</scope>
    <source>
        <strain>cv. Columbia</strain>
    </source>
</reference>
<reference key="3">
    <citation type="journal article" date="2017" name="Plant J.">
        <title>Araport11: a complete reannotation of the Arabidopsis thaliana reference genome.</title>
        <authorList>
            <person name="Cheng C.Y."/>
            <person name="Krishnakumar V."/>
            <person name="Chan A.P."/>
            <person name="Thibaud-Nissen F."/>
            <person name="Schobel S."/>
            <person name="Town C.D."/>
        </authorList>
    </citation>
    <scope>GENOME REANNOTATION</scope>
    <source>
        <strain>cv. Columbia</strain>
    </source>
</reference>
<reference key="4">
    <citation type="journal article" date="2003" name="Science">
        <title>Empirical analysis of transcriptional activity in the Arabidopsis genome.</title>
        <authorList>
            <person name="Yamada K."/>
            <person name="Lim J."/>
            <person name="Dale J.M."/>
            <person name="Chen H."/>
            <person name="Shinn P."/>
            <person name="Palm C.J."/>
            <person name="Southwick A.M."/>
            <person name="Wu H.C."/>
            <person name="Kim C.J."/>
            <person name="Nguyen M."/>
            <person name="Pham P.K."/>
            <person name="Cheuk R.F."/>
            <person name="Karlin-Newmann G."/>
            <person name="Liu S.X."/>
            <person name="Lam B."/>
            <person name="Sakano H."/>
            <person name="Wu T."/>
            <person name="Yu G."/>
            <person name="Miranda M."/>
            <person name="Quach H.L."/>
            <person name="Tripp M."/>
            <person name="Chang C.H."/>
            <person name="Lee J.M."/>
            <person name="Toriumi M.J."/>
            <person name="Chan M.M."/>
            <person name="Tang C.C."/>
            <person name="Onodera C.S."/>
            <person name="Deng J.M."/>
            <person name="Akiyama K."/>
            <person name="Ansari Y."/>
            <person name="Arakawa T."/>
            <person name="Banh J."/>
            <person name="Banno F."/>
            <person name="Bowser L."/>
            <person name="Brooks S.Y."/>
            <person name="Carninci P."/>
            <person name="Chao Q."/>
            <person name="Choy N."/>
            <person name="Enju A."/>
            <person name="Goldsmith A.D."/>
            <person name="Gurjal M."/>
            <person name="Hansen N.F."/>
            <person name="Hayashizaki Y."/>
            <person name="Johnson-Hopson C."/>
            <person name="Hsuan V.W."/>
            <person name="Iida K."/>
            <person name="Karnes M."/>
            <person name="Khan S."/>
            <person name="Koesema E."/>
            <person name="Ishida J."/>
            <person name="Jiang P.X."/>
            <person name="Jones T."/>
            <person name="Kawai J."/>
            <person name="Kamiya A."/>
            <person name="Meyers C."/>
            <person name="Nakajima M."/>
            <person name="Narusaka M."/>
            <person name="Seki M."/>
            <person name="Sakurai T."/>
            <person name="Satou M."/>
            <person name="Tamse R."/>
            <person name="Vaysberg M."/>
            <person name="Wallender E.K."/>
            <person name="Wong C."/>
            <person name="Yamamura Y."/>
            <person name="Yuan S."/>
            <person name="Shinozaki K."/>
            <person name="Davis R.W."/>
            <person name="Theologis A."/>
            <person name="Ecker J.R."/>
        </authorList>
    </citation>
    <scope>NUCLEOTIDE SEQUENCE [LARGE SCALE MRNA]</scope>
    <source>
        <strain>cv. Columbia</strain>
    </source>
</reference>
<reference key="5">
    <citation type="submission" date="2002-03" db="EMBL/GenBank/DDBJ databases">
        <title>Full-length cDNA from Arabidopsis thaliana.</title>
        <authorList>
            <person name="Brover V.V."/>
            <person name="Troukhan M.E."/>
            <person name="Alexandrov N.A."/>
            <person name="Lu Y.-P."/>
            <person name="Flavell R.B."/>
            <person name="Feldmann K.A."/>
        </authorList>
    </citation>
    <scope>NUCLEOTIDE SEQUENCE [LARGE SCALE MRNA]</scope>
</reference>
<reference key="6">
    <citation type="journal article" date="2006" name="Plant Cell">
        <title>The plastid protein THYLAKOID FORMATION1 and the plasma membrane G-protein GPA1 interact in a novel sugar-signaling mechanism in Arabidopsis.</title>
        <authorList>
            <person name="Huang J."/>
            <person name="Taylor J.P."/>
            <person name="Chen J.-G."/>
            <person name="Uhrig J.F."/>
            <person name="Schnell D.J."/>
            <person name="Nakagawa T."/>
            <person name="Korth K.L."/>
            <person name="Jones A.M."/>
        </authorList>
    </citation>
    <scope>FUNCTION</scope>
    <scope>SUBCELLULAR LOCATION</scope>
    <scope>POSSIBLE TOPOLOGY</scope>
    <scope>TISSUE SPECIFICITY</scope>
    <scope>INTERACTION WITH GPA1</scope>
</reference>